<reference key="1">
    <citation type="journal article" date="1996" name="J. Bacteriol.">
        <title>Escherichia coli fliAZY operon.</title>
        <authorList>
            <person name="Mytelka D.S."/>
            <person name="Chamberlin M.J."/>
        </authorList>
    </citation>
    <scope>NUCLEOTIDE SEQUENCE [GENOMIC DNA]</scope>
    <source>
        <strain>K12 / RP437</strain>
    </source>
</reference>
<reference key="2">
    <citation type="journal article" date="1996" name="DNA Res.">
        <title>A 460-kb DNA sequence of the Escherichia coli K-12 genome corresponding to the 40.1-50.0 min region on the linkage map.</title>
        <authorList>
            <person name="Itoh T."/>
            <person name="Aiba H."/>
            <person name="Baba T."/>
            <person name="Fujita K."/>
            <person name="Hayashi K."/>
            <person name="Inada T."/>
            <person name="Isono K."/>
            <person name="Kasai H."/>
            <person name="Kimura S."/>
            <person name="Kitakawa M."/>
            <person name="Kitagawa M."/>
            <person name="Makino K."/>
            <person name="Miki T."/>
            <person name="Mizobuchi K."/>
            <person name="Mori H."/>
            <person name="Mori T."/>
            <person name="Motomura K."/>
            <person name="Nakade S."/>
            <person name="Nakamura Y."/>
            <person name="Nashimoto H."/>
            <person name="Nishio Y."/>
            <person name="Oshima T."/>
            <person name="Saito N."/>
            <person name="Sampei G."/>
            <person name="Seki Y."/>
            <person name="Sivasundaram S."/>
            <person name="Tagami H."/>
            <person name="Takeda J."/>
            <person name="Takemoto K."/>
            <person name="Wada C."/>
            <person name="Yamamoto Y."/>
            <person name="Horiuchi T."/>
        </authorList>
    </citation>
    <scope>NUCLEOTIDE SEQUENCE [LARGE SCALE GENOMIC DNA]</scope>
    <source>
        <strain>K12 / W3110 / ATCC 27325 / DSM 5911</strain>
    </source>
</reference>
<reference key="3">
    <citation type="journal article" date="1997" name="Science">
        <title>The complete genome sequence of Escherichia coli K-12.</title>
        <authorList>
            <person name="Blattner F.R."/>
            <person name="Plunkett G. III"/>
            <person name="Bloch C.A."/>
            <person name="Perna N.T."/>
            <person name="Burland V."/>
            <person name="Riley M."/>
            <person name="Collado-Vides J."/>
            <person name="Glasner J.D."/>
            <person name="Rode C.K."/>
            <person name="Mayhew G.F."/>
            <person name="Gregor J."/>
            <person name="Davis N.W."/>
            <person name="Kirkpatrick H.A."/>
            <person name="Goeden M.A."/>
            <person name="Rose D.J."/>
            <person name="Mau B."/>
            <person name="Shao Y."/>
        </authorList>
    </citation>
    <scope>NUCLEOTIDE SEQUENCE [LARGE SCALE GENOMIC DNA]</scope>
    <source>
        <strain>K12 / MG1655 / ATCC 47076</strain>
    </source>
</reference>
<reference key="4">
    <citation type="journal article" date="2006" name="Mol. Syst. Biol.">
        <title>Highly accurate genome sequences of Escherichia coli K-12 strains MG1655 and W3110.</title>
        <authorList>
            <person name="Hayashi K."/>
            <person name="Morooka N."/>
            <person name="Yamamoto Y."/>
            <person name="Fujita K."/>
            <person name="Isono K."/>
            <person name="Choi S."/>
            <person name="Ohtsubo E."/>
            <person name="Baba T."/>
            <person name="Wanner B.L."/>
            <person name="Mori H."/>
            <person name="Horiuchi T."/>
        </authorList>
    </citation>
    <scope>NUCLEOTIDE SEQUENCE [LARGE SCALE GENOMIC DNA]</scope>
    <source>
        <strain>K12 / W3110 / ATCC 27325 / DSM 5911</strain>
    </source>
</reference>
<reference key="5">
    <citation type="journal article" date="1993" name="Life Sci.">
        <title>Amino acid composition and N-terminal sequence of purified cystine binding protein of Escherichia coli.</title>
        <authorList>
            <person name="Butler J.D."/>
            <person name="Levin S.W."/>
            <person name="Facchiano A."/>
            <person name="Miele L."/>
            <person name="Mukherjee A.B."/>
        </authorList>
    </citation>
    <scope>PROTEIN SEQUENCE OF 30-59</scope>
    <scope>FUNCTION</scope>
</reference>
<reference key="6">
    <citation type="journal article" date="1997" name="Electrophoresis">
        <title>Comparing the predicted and observed properties of proteins encoded in the genome of Escherichia coli K-12.</title>
        <authorList>
            <person name="Link A.J."/>
            <person name="Robison K."/>
            <person name="Church G.M."/>
        </authorList>
    </citation>
    <scope>PROTEIN SEQUENCE OF 30-41</scope>
    <source>
        <strain>K12 / EMG2</strain>
    </source>
</reference>
<reference key="7">
    <citation type="journal article" date="1996" name="Eur. J. Biochem.">
        <title>Analysis of global responses by protein and peptide fingerprinting of proteins isolated by two-dimensional gel electrophoresis. Application to the sulfate-starvation response of Escherichia coli.</title>
        <authorList>
            <person name="Quadroni M."/>
            <person name="Staudenmann W."/>
            <person name="Kertesz M.A."/>
            <person name="James P."/>
        </authorList>
    </citation>
    <scope>PROTEIN SEQUENCE OF 30-39; 143-148; 183-187 AND 249-266</scope>
    <source>
        <strain>K12 / MC4100 / ATCC 35695 / DSM 6574</strain>
    </source>
</reference>
<reference key="8">
    <citation type="journal article" date="1972" name="J. Biol. Chem.">
        <title>A binding protein involved in the transport of cystine and diaminopimelic acid in Escherichia coli.</title>
        <authorList>
            <person name="Berger E.A."/>
            <person name="Heppel L.A."/>
        </authorList>
    </citation>
    <scope>FUNCTION</scope>
    <source>
        <strain>W</strain>
    </source>
</reference>
<reference key="9">
    <citation type="journal article" date="2010" name="J. Biol. Chem.">
        <title>The L-cysteine/L-cystine shuttle system provides reducing equivalents to the periplasm in Escherichia coli.</title>
        <authorList>
            <person name="Ohtsu I."/>
            <person name="Wiriyathanawudhiwong N."/>
            <person name="Morigasaki S."/>
            <person name="Nakatani T."/>
            <person name="Kadokura H."/>
            <person name="Takagi H."/>
        </authorList>
    </citation>
    <scope>FUNCTION</scope>
    <scope>SUBCELLULAR LOCATION</scope>
    <scope>INDUCTION</scope>
    <scope>DISRUPTION PHENOTYPE</scope>
</reference>
<reference key="10">
    <citation type="journal article" date="2014" name="J. Appl. Microbiol.">
        <title>Susceptibility of Escherichia coli to the toxic L-proline analogue L-selenaproline is dependent on two L-cystine transport systems.</title>
        <authorList>
            <person name="Deutch C.E."/>
            <person name="Spahija I."/>
            <person name="Wagner C.E."/>
        </authorList>
    </citation>
    <scope>FUNCTION</scope>
    <scope>ACTIVITY REGULATION</scope>
    <scope>DISRUPTION PHENOTYPE</scope>
    <source>
        <strain>K12</strain>
    </source>
</reference>
<reference key="11">
    <citation type="journal article" date="2015" name="PLoS ONE">
        <title>Uptake of L-cystine via an ABC transporter contributes defense of oxidative stress in the L-cystine export-dependent manner in Escherichia coli.</title>
        <authorList>
            <person name="Ohtsu I."/>
            <person name="Kawano Y."/>
            <person name="Suzuki M."/>
            <person name="Morigasaki S."/>
            <person name="Saiki K."/>
            <person name="Yamazaki S."/>
            <person name="Nonaka G."/>
            <person name="Takagi H."/>
        </authorList>
    </citation>
    <scope>FUNCTION</scope>
    <scope>SUBUNIT</scope>
    <scope>INDUCTION</scope>
    <scope>DISRUPTION PHENOTYPE</scope>
</reference>
<reference key="12">
    <citation type="journal article" date="2015" name="J. Bacteriol.">
        <title>Physiological roles and adverse effects of the two cystine importers of Escherichia coli.</title>
        <authorList>
            <person name="Chonoles Imlay K.R."/>
            <person name="Korshunov S."/>
            <person name="Imlay J.A."/>
        </authorList>
    </citation>
    <scope>FUNCTION</scope>
    <scope>SUBUNIT</scope>
    <scope>INDUCTION</scope>
    <scope>DISRUPTION PHENOTYPE</scope>
</reference>
<gene>
    <name evidence="9" type="primary">tcyJ</name>
    <name evidence="10" type="synonym">fliY</name>
    <name type="synonym">yzzR</name>
    <name type="ordered locus">b1920</name>
    <name type="ordered locus">JW1905</name>
</gene>
<organism>
    <name type="scientific">Escherichia coli (strain K12)</name>
    <dbReference type="NCBI Taxonomy" id="83333"/>
    <lineage>
        <taxon>Bacteria</taxon>
        <taxon>Pseudomonadati</taxon>
        <taxon>Pseudomonadota</taxon>
        <taxon>Gammaproteobacteria</taxon>
        <taxon>Enterobacterales</taxon>
        <taxon>Enterobacteriaceae</taxon>
        <taxon>Escherichia</taxon>
    </lineage>
</organism>
<sequence length="266" mass="29039">MKLAHLGRQALMGVMAVALVAGMSVKSFADEGLLNKVKERGTLLVGLEGTYPPFSFQGDDGKLTGFEVEFAQQLAKHLGVEASLKPTKWDGMLASLDSKRIDVVINQVTISDERKKKYDFSTPYTISGIQALVKKGNEGTIKTADDLKGKKVGVGLGTNYEEWLRQNVQGVDVRTYDDDPTKYQDLRVGRIDAILVDRLAALDLVKKTNDTLAVTGEAFSRQESGVALRKGNEDLLKAVNDAIAEMQKDGTLQALSEKWFGADVTK</sequence>
<proteinExistence type="evidence at protein level"/>
<dbReference type="EMBL" id="U18539">
    <property type="protein sequence ID" value="AAC43545.1"/>
    <property type="molecule type" value="Genomic_DNA"/>
</dbReference>
<dbReference type="EMBL" id="U00096">
    <property type="protein sequence ID" value="AAC74987.1"/>
    <property type="molecule type" value="Genomic_DNA"/>
</dbReference>
<dbReference type="EMBL" id="AP009048">
    <property type="protein sequence ID" value="BAA15740.1"/>
    <property type="molecule type" value="Genomic_DNA"/>
</dbReference>
<dbReference type="PIR" id="E64955">
    <property type="entry name" value="E64955"/>
</dbReference>
<dbReference type="RefSeq" id="NP_416430.1">
    <property type="nucleotide sequence ID" value="NC_000913.3"/>
</dbReference>
<dbReference type="RefSeq" id="WP_001296168.1">
    <property type="nucleotide sequence ID" value="NZ_SSUV01000013.1"/>
</dbReference>
<dbReference type="SMR" id="P0AEM9"/>
<dbReference type="BioGRID" id="4261251">
    <property type="interactions" value="75"/>
</dbReference>
<dbReference type="ComplexPortal" id="CPX-4406">
    <property type="entry name" value="L-cystine ABC transporter complex"/>
</dbReference>
<dbReference type="DIP" id="DIP-47980N"/>
<dbReference type="FunCoup" id="P0AEM9">
    <property type="interactions" value="287"/>
</dbReference>
<dbReference type="IntAct" id="P0AEM9">
    <property type="interactions" value="9"/>
</dbReference>
<dbReference type="STRING" id="511145.b1920"/>
<dbReference type="TCDB" id="3.A.1.3.10">
    <property type="family name" value="the atp-binding cassette (abc) superfamily"/>
</dbReference>
<dbReference type="jPOST" id="P0AEM9"/>
<dbReference type="PaxDb" id="511145-b1920"/>
<dbReference type="EnsemblBacteria" id="AAC74987">
    <property type="protein sequence ID" value="AAC74987"/>
    <property type="gene ID" value="b1920"/>
</dbReference>
<dbReference type="GeneID" id="93776227"/>
<dbReference type="GeneID" id="948833"/>
<dbReference type="KEGG" id="ecj:JW1905"/>
<dbReference type="KEGG" id="eco:b1920"/>
<dbReference type="KEGG" id="ecoc:C3026_10895"/>
<dbReference type="PATRIC" id="fig|511145.12.peg.2002"/>
<dbReference type="EchoBASE" id="EB2545"/>
<dbReference type="eggNOG" id="COG0834">
    <property type="taxonomic scope" value="Bacteria"/>
</dbReference>
<dbReference type="HOGENOM" id="CLU_019602_18_5_6"/>
<dbReference type="InParanoid" id="P0AEM9"/>
<dbReference type="OMA" id="DFKKHKP"/>
<dbReference type="OrthoDB" id="368476at2"/>
<dbReference type="PhylomeDB" id="P0AEM9"/>
<dbReference type="BioCyc" id="EcoCyc:G7039-MONOMER"/>
<dbReference type="BioCyc" id="MetaCyc:G7039-MONOMER"/>
<dbReference type="PRO" id="PR:P0AEM9"/>
<dbReference type="Proteomes" id="UP000000625">
    <property type="component" value="Chromosome"/>
</dbReference>
<dbReference type="GO" id="GO:0055052">
    <property type="term" value="C:ATP-binding cassette (ABC) transporter complex, substrate-binding subunit-containing"/>
    <property type="evidence" value="ECO:0000303"/>
    <property type="project" value="ComplexPortal"/>
</dbReference>
<dbReference type="GO" id="GO:0030288">
    <property type="term" value="C:outer membrane-bounded periplasmic space"/>
    <property type="evidence" value="ECO:0000314"/>
    <property type="project" value="EcoCyc"/>
</dbReference>
<dbReference type="GO" id="GO:0016597">
    <property type="term" value="F:amino acid binding"/>
    <property type="evidence" value="ECO:0000314"/>
    <property type="project" value="EcoCyc"/>
</dbReference>
<dbReference type="GO" id="GO:0015184">
    <property type="term" value="F:L-cystine transmembrane transporter activity"/>
    <property type="evidence" value="ECO:0000314"/>
    <property type="project" value="EcoCyc"/>
</dbReference>
<dbReference type="GO" id="GO:0015276">
    <property type="term" value="F:ligand-gated monoatomic ion channel activity"/>
    <property type="evidence" value="ECO:0007669"/>
    <property type="project" value="InterPro"/>
</dbReference>
<dbReference type="GO" id="GO:1903712">
    <property type="term" value="P:cysteine transmembrane transport"/>
    <property type="evidence" value="ECO:0000303"/>
    <property type="project" value="ComplexPortal"/>
</dbReference>
<dbReference type="GO" id="GO:0015830">
    <property type="term" value="P:diaminopimelate transport"/>
    <property type="evidence" value="ECO:0000316"/>
    <property type="project" value="EcoCyc"/>
</dbReference>
<dbReference type="GO" id="GO:0015811">
    <property type="term" value="P:L-cystine transport"/>
    <property type="evidence" value="ECO:0000314"/>
    <property type="project" value="EcoCyc"/>
</dbReference>
<dbReference type="GO" id="GO:0006791">
    <property type="term" value="P:sulfur utilization"/>
    <property type="evidence" value="ECO:0000270"/>
    <property type="project" value="EcoCyc"/>
</dbReference>
<dbReference type="CDD" id="cd13712">
    <property type="entry name" value="PBP2_FliY"/>
    <property type="match status" value="1"/>
</dbReference>
<dbReference type="FunFam" id="3.40.190.10:FF:000067">
    <property type="entry name" value="Cystine ABC transporter substrate-binding protein"/>
    <property type="match status" value="1"/>
</dbReference>
<dbReference type="Gene3D" id="3.40.190.10">
    <property type="entry name" value="Periplasmic binding protein-like II"/>
    <property type="match status" value="2"/>
</dbReference>
<dbReference type="InterPro" id="IPR001320">
    <property type="entry name" value="Iontro_rcpt_C"/>
</dbReference>
<dbReference type="InterPro" id="IPR018313">
    <property type="entry name" value="SBP_3_CS"/>
</dbReference>
<dbReference type="InterPro" id="IPR001638">
    <property type="entry name" value="Solute-binding_3/MltF_N"/>
</dbReference>
<dbReference type="NCBIfam" id="NF008426">
    <property type="entry name" value="PRK11260.1"/>
    <property type="match status" value="1"/>
</dbReference>
<dbReference type="PANTHER" id="PTHR35936:SF35">
    <property type="entry name" value="L-CYSTINE-BINDING PROTEIN TCYJ"/>
    <property type="match status" value="1"/>
</dbReference>
<dbReference type="PANTHER" id="PTHR35936">
    <property type="entry name" value="MEMBRANE-BOUND LYTIC MUREIN TRANSGLYCOSYLASE F"/>
    <property type="match status" value="1"/>
</dbReference>
<dbReference type="Pfam" id="PF00497">
    <property type="entry name" value="SBP_bac_3"/>
    <property type="match status" value="1"/>
</dbReference>
<dbReference type="SMART" id="SM00062">
    <property type="entry name" value="PBPb"/>
    <property type="match status" value="1"/>
</dbReference>
<dbReference type="SMART" id="SM00079">
    <property type="entry name" value="PBPe"/>
    <property type="match status" value="1"/>
</dbReference>
<dbReference type="SUPFAM" id="SSF53850">
    <property type="entry name" value="Periplasmic binding protein-like II"/>
    <property type="match status" value="1"/>
</dbReference>
<dbReference type="PROSITE" id="PS01039">
    <property type="entry name" value="SBP_BACTERIAL_3"/>
    <property type="match status" value="1"/>
</dbReference>
<keyword id="KW-0029">Amino-acid transport</keyword>
<keyword id="KW-0903">Direct protein sequencing</keyword>
<keyword id="KW-0574">Periplasm</keyword>
<keyword id="KW-1185">Reference proteome</keyword>
<keyword id="KW-0732">Signal</keyword>
<keyword id="KW-0813">Transport</keyword>
<comment type="function">
    <text evidence="1 2 3 4 5 6">Part of the ABC transporter complex TcyJLN involved in L-cystine import (PubMed:20351115, PubMed:25139244, PubMed:25837721, PubMed:26350134). This high affinity cystine transporter is involved in resistance to oxidative stress by forming a L-cysteine/L-cystine shuttle system with the EamA transporter, which exports L-cysteine as reducing equivalents to the periplasm to prevent the cells from oxidative stress. Exported L-cysteine can reduce the periplasmic hydrogen peroxide to water, and then generated L-cystine is imported back into the cytoplasm via the TcyJLN complex (PubMed:20351115, PubMed:25837721). Functions at low cystine concentrations (PubMed:26350134). The system can also transport L-cysteine, diaminopimelic acid (DAP), djenkolate, lanthionine, D-cystine, homocystine, and it mediates accumulation of the toxic compounds L-selenaproline (SCA) and L-selenocystine (SeCys) (PubMed:25139244, PubMed:26350134). Binds cystine and DAP (PubMed:4564569, PubMed:8450713).</text>
</comment>
<comment type="activity regulation">
    <text evidence="2">The TcyJLN system is inhibited by L-cystine, L-cysteine, DL-2,6-diaminopimelic acid and L-cystathionine, and is stimulated by D-cysteine.</text>
</comment>
<comment type="subunit">
    <text evidence="13 14">The complex is composed of two ATP-binding proteins (TcyN), two transmembrane proteins (TcyL) and a solute-binding protein (TcyJ).</text>
</comment>
<comment type="subcellular location">
    <subcellularLocation>
        <location evidence="12">Periplasm</location>
    </subcellularLocation>
</comment>
<comment type="induction">
    <text evidence="1 3 4">Transcription is controlled by CysB (PubMed:26350134). Expression is highly induced by H(2)O(2) (PubMed:20351115, PubMed:25837721). Induced by sulfate (PubMed:26350134). Also slightly induced by exogenous L-cysteine (PubMed:20351115).</text>
</comment>
<comment type="disruption phenotype">
    <text evidence="1 2 3 4">Disruption of the gene significantly impairs intracellular uptake of L-cystine (PubMed:20351115, PubMed:25837721). Mutants show a higher sensitivity to H(2)O(2) than wild-type cells (PubMed:20351115). The tcyJ-tcyP double mutant is unable to import cystine and is completely resistant to both L-selenaproline and L-selenocystine (PubMed:25139244, PubMed:26350134). The double disruption of eamA and tcyJ increases cellular levels of lipid peroxides (PubMed:25837721).</text>
</comment>
<comment type="similarity">
    <text evidence="11">Belongs to the bacterial solute-binding protein 3 family.</text>
</comment>
<name>TCYJ_ECOLI</name>
<feature type="signal peptide" evidence="6 7 8">
    <location>
        <begin position="1"/>
        <end position="29"/>
    </location>
</feature>
<feature type="chain" id="PRO_0000031755" description="L-cystine-binding protein TcyJ">
    <location>
        <begin position="30"/>
        <end position="266"/>
    </location>
</feature>
<accession>P0AEM9</accession>
<accession>P39174</accession>
<protein>
    <recommendedName>
        <fullName evidence="11">L-cystine-binding protein TcyJ</fullName>
        <shortName>CBP</shortName>
    </recommendedName>
    <alternativeName>
        <fullName>Protein FliY</fullName>
    </alternativeName>
    <alternativeName>
        <fullName>Sulfate starvation-induced protein 7</fullName>
        <shortName>SSI7</shortName>
    </alternativeName>
</protein>
<evidence type="ECO:0000269" key="1">
    <source>
    </source>
</evidence>
<evidence type="ECO:0000269" key="2">
    <source>
    </source>
</evidence>
<evidence type="ECO:0000269" key="3">
    <source>
    </source>
</evidence>
<evidence type="ECO:0000269" key="4">
    <source>
    </source>
</evidence>
<evidence type="ECO:0000269" key="5">
    <source>
    </source>
</evidence>
<evidence type="ECO:0000269" key="6">
    <source>
    </source>
</evidence>
<evidence type="ECO:0000269" key="7">
    <source>
    </source>
</evidence>
<evidence type="ECO:0000269" key="8">
    <source>
    </source>
</evidence>
<evidence type="ECO:0000303" key="9">
    <source>
    </source>
</evidence>
<evidence type="ECO:0000303" key="10">
    <source>
    </source>
</evidence>
<evidence type="ECO:0000305" key="11"/>
<evidence type="ECO:0000305" key="12">
    <source>
    </source>
</evidence>
<evidence type="ECO:0000305" key="13">
    <source>
    </source>
</evidence>
<evidence type="ECO:0000305" key="14">
    <source>
    </source>
</evidence>